<reference evidence="4" key="1">
    <citation type="submission" date="2023-05" db="UniProtKB">
        <title>Grouping groupers in the Mediterranean: ecological baselines revealed by ancient proteins.</title>
        <authorList>
            <person name="Winter R.M."/>
            <person name="de Kock W."/>
            <person name="Mackie M."/>
            <person name="Ramsoe M."/>
            <person name="Desidera E."/>
            <person name="Collins M."/>
            <person name="Guidetti P."/>
            <person name="Presslee S."/>
            <person name="Munoz-Alegre M."/>
            <person name="Oueslati T."/>
            <person name="Morales-Muniz A."/>
            <person name="Michailidis D."/>
            <person name="van den Hurk Y."/>
            <person name="Taurozzi A.J."/>
            <person name="Cakirlar C."/>
        </authorList>
    </citation>
    <scope>PROTEIN SEQUENCE</scope>
    <scope>IDENTIFICATION BY MASS SPECTROMETRY</scope>
    <source>
        <tissue evidence="3">Bone</tissue>
    </source>
</reference>
<evidence type="ECO:0000255" key="1">
    <source>
        <dbReference type="PROSITE-ProRule" id="PRU00793"/>
    </source>
</evidence>
<evidence type="ECO:0000256" key="2">
    <source>
        <dbReference type="SAM" id="MobiDB-lite"/>
    </source>
</evidence>
<evidence type="ECO:0000303" key="3">
    <source ref="1"/>
</evidence>
<evidence type="ECO:0000305" key="4"/>
<protein>
    <recommendedName>
        <fullName evidence="4">Collagen, type I, alpha 1a</fullName>
        <shortName evidence="4">col1a1a</shortName>
    </recommendedName>
    <alternativeName>
        <fullName evidence="4">Alpha-1 type I collagen</fullName>
    </alternativeName>
</protein>
<name>CO1AA_EPICS</name>
<feature type="chain" id="PRO_0000459601" description="Collagen, type I, alpha 1a">
    <location>
        <begin position="1"/>
        <end position="1018"/>
    </location>
</feature>
<feature type="domain" description="Fibrillar collagen NC1" evidence="1">
    <location>
        <begin position="932"/>
        <end position="1018"/>
    </location>
</feature>
<feature type="region of interest" description="Disordered" evidence="2">
    <location>
        <begin position="1"/>
        <end position="991"/>
    </location>
</feature>
<feature type="compositionally biased region" description="Basic and acidic residues" evidence="2">
    <location>
        <begin position="1"/>
        <end position="10"/>
    </location>
</feature>
<feature type="compositionally biased region" description="Pro residues" evidence="2">
    <location>
        <begin position="13"/>
        <end position="30"/>
    </location>
</feature>
<feature type="compositionally biased region" description="Low complexity" evidence="2">
    <location>
        <begin position="31"/>
        <end position="58"/>
    </location>
</feature>
<feature type="compositionally biased region" description="Basic and acidic residues" evidence="2">
    <location>
        <begin position="67"/>
        <end position="81"/>
    </location>
</feature>
<feature type="compositionally biased region" description="Low complexity" evidence="2">
    <location>
        <begin position="126"/>
        <end position="136"/>
    </location>
</feature>
<feature type="compositionally biased region" description="Pro residues" evidence="2">
    <location>
        <begin position="138"/>
        <end position="151"/>
    </location>
</feature>
<feature type="compositionally biased region" description="Gly residues" evidence="2">
    <location>
        <begin position="152"/>
        <end position="170"/>
    </location>
</feature>
<feature type="compositionally biased region" description="Low complexity" evidence="2">
    <location>
        <begin position="171"/>
        <end position="214"/>
    </location>
</feature>
<feature type="compositionally biased region" description="Low complexity" evidence="2">
    <location>
        <begin position="223"/>
        <end position="261"/>
    </location>
</feature>
<feature type="compositionally biased region" description="Gly residues" evidence="2">
    <location>
        <begin position="284"/>
        <end position="296"/>
    </location>
</feature>
<feature type="compositionally biased region" description="Low complexity" evidence="2">
    <location>
        <begin position="370"/>
        <end position="385"/>
    </location>
</feature>
<feature type="compositionally biased region" description="Low complexity" evidence="2">
    <location>
        <begin position="424"/>
        <end position="442"/>
    </location>
</feature>
<feature type="compositionally biased region" description="Low complexity" evidence="2">
    <location>
        <begin position="452"/>
        <end position="510"/>
    </location>
</feature>
<feature type="compositionally biased region" description="Low complexity" evidence="2">
    <location>
        <begin position="543"/>
        <end position="558"/>
    </location>
</feature>
<feature type="compositionally biased region" description="Gly residues" evidence="2">
    <location>
        <begin position="568"/>
        <end position="577"/>
    </location>
</feature>
<feature type="compositionally biased region" description="Low complexity" evidence="2">
    <location>
        <begin position="591"/>
        <end position="627"/>
    </location>
</feature>
<feature type="compositionally biased region" description="Low complexity" evidence="2">
    <location>
        <begin position="641"/>
        <end position="663"/>
    </location>
</feature>
<feature type="compositionally biased region" description="Pro residues" evidence="2">
    <location>
        <begin position="665"/>
        <end position="677"/>
    </location>
</feature>
<feature type="compositionally biased region" description="Low complexity" evidence="2">
    <location>
        <begin position="701"/>
        <end position="746"/>
    </location>
</feature>
<feature type="compositionally biased region" description="Low complexity" evidence="2">
    <location>
        <begin position="775"/>
        <end position="795"/>
    </location>
</feature>
<feature type="compositionally biased region" description="Pro residues" evidence="2">
    <location>
        <begin position="819"/>
        <end position="829"/>
    </location>
</feature>
<feature type="compositionally biased region" description="Low complexity" evidence="2">
    <location>
        <begin position="843"/>
        <end position="862"/>
    </location>
</feature>
<feature type="compositionally biased region" description="Basic and acidic residues" evidence="2">
    <location>
        <begin position="865"/>
        <end position="876"/>
    </location>
</feature>
<feature type="compositionally biased region" description="Low complexity" evidence="2">
    <location>
        <begin position="889"/>
        <end position="925"/>
    </location>
</feature>
<feature type="compositionally biased region" description="Basic and acidic residues" evidence="2">
    <location>
        <begin position="948"/>
        <end position="959"/>
    </location>
</feature>
<feature type="compositionally biased region" description="Polar residues" evidence="2">
    <location>
        <begin position="963"/>
        <end position="973"/>
    </location>
</feature>
<feature type="disulfide bond" description="Interchain" evidence="1">
    <location>
        <position position="993"/>
    </location>
</feature>
<feature type="non-consecutive residues" evidence="3">
    <location>
        <begin position="91"/>
        <end position="92"/>
    </location>
</feature>
<feature type="non-consecutive residues" evidence="3">
    <location>
        <begin position="127"/>
        <end position="128"/>
    </location>
</feature>
<feature type="non-consecutive residues" evidence="3">
    <location>
        <begin position="286"/>
        <end position="287"/>
    </location>
</feature>
<feature type="non-consecutive residues" evidence="3">
    <location>
        <begin position="446"/>
        <end position="447"/>
    </location>
</feature>
<feature type="non-consecutive residues" evidence="3">
    <location>
        <begin position="465"/>
        <end position="466"/>
    </location>
</feature>
<feature type="non-consecutive residues" evidence="3">
    <location>
        <begin position="732"/>
        <end position="733"/>
    </location>
</feature>
<feature type="non-consecutive residues" evidence="3">
    <location>
        <begin position="877"/>
        <end position="878"/>
    </location>
</feature>
<feature type="non-consecutive residues" evidence="3">
    <location>
        <begin position="935"/>
        <end position="936"/>
    </location>
</feature>
<feature type="non-consecutive residues" evidence="3">
    <location>
        <begin position="954"/>
        <end position="955"/>
    </location>
</feature>
<feature type="non-consecutive residues" evidence="3">
    <location>
        <begin position="981"/>
        <end position="982"/>
    </location>
</feature>
<feature type="non-consecutive residues" evidence="3">
    <location>
        <begin position="999"/>
        <end position="1000"/>
    </location>
</feature>
<feature type="non-terminal residue" evidence="3">
    <location>
        <position position="1"/>
    </location>
</feature>
<feature type="non-terminal residue" evidence="3">
    <location>
        <position position="1018"/>
    </location>
</feature>
<sequence>QMSAGYDDKSPAMPVPGPMGPMGPRGPPGSPGASGPQGFTGPPGEPGEAGPSGAMGPRGPAGPPGKNGEDGESGKPGRGGERGPPGPQGARGFSGLDGAKGDSGPAGPKGESGAPGENGTPGAMGPRGNDGAAGAAGPPGPTGPAGPPGFPGGPGAKGDAGAQGGRGPEGPAGARGEPGNPGPAGAAGPSGNPGTDGAAGPKGTPGAAGVAGAPGFPGPRGPSGPQGAAGAPGPKGNTGEVGAPGAKGEAGAKGEAGAPGVQGPPGPSGEEGKRGARGEPGAAGARGGPGGRGFPGSDGPAGPKGATGERGAPGAVGPKGATGEPGRTGEPGLPGAKGMTGSPGSPGPDGKTGAAGPSGQDGRPGPPGPVGARGQPGVMGFPGPKGAAGEGGKPGERGVMGPTGAAGAPGKDGDVGAPGPSGPAGPAGERXXXGPAGAPGFQGLPGPGEQGLPGEAGATGPAGARGAPGALGPAGARGSPGSSGNDGAKGDAGAPGAPGAQGPPGLQGMPGERGAAGLPGLRGDRGDQGAKGADGAPGKDGPRGLTGPLGLPGPAGATGDKGEPGPAGPVGPGGARGAPGERGESGPPGPAGFAGPPGADGQPGAKGEAGDNGAKGDAGPPGAAGPTGAPGPQGPVGNTGPKGARGAAGPPGATGFPGAAGRVGPPGPSGNPGPPGPAGGTGKEGPKGNRGETGPAGRTGEVGAAGPPGPAGEKGSPGAEGATGSAGLPGPQVGLPGQRGERXXPGLPGPAGEPGKPGPSGPGGERGPPGPMGPPGLAGAPGEPGREGSPGNEGSAGRDGAAGPKGDRGESGPSGAPGAPGPPGAPGPVGPAGKNGDRGETGPAGPAGSAGPAGPRGPAGAPGLRGDKGESGEAGERGFTGMQGPPGPSGSSGEQGPAGAAGPAGPRGPAGSAGSPGKDGMSGLPGPTGPPGPRGGFDLGFLSQPQEKAPDPFRDRDLEVDSTLKSLSQQLEQLRSPDGTRSGEYWLDPDQGCTEDALKFTYSVLEDGCTSHTGTWGK</sequence>
<keyword id="KW-0176">Collagen</keyword>
<keyword id="KW-0903">Direct protein sequencing</keyword>
<keyword id="KW-1015">Disulfide bond</keyword>
<keyword id="KW-0272">Extracellular matrix</keyword>
<keyword id="KW-0964">Secreted</keyword>
<organism evidence="3">
    <name type="scientific">Epinephelus costae</name>
    <name type="common">Goldblotch grouper</name>
    <name type="synonym">Serranus costae</name>
    <dbReference type="NCBI Taxonomy" id="309632"/>
    <lineage>
        <taxon>Eukaryota</taxon>
        <taxon>Metazoa</taxon>
        <taxon>Chordata</taxon>
        <taxon>Craniata</taxon>
        <taxon>Vertebrata</taxon>
        <taxon>Euteleostomi</taxon>
        <taxon>Actinopterygii</taxon>
        <taxon>Neopterygii</taxon>
        <taxon>Teleostei</taxon>
        <taxon>Neoteleostei</taxon>
        <taxon>Acanthomorphata</taxon>
        <taxon>Eupercaria</taxon>
        <taxon>Perciformes</taxon>
        <taxon>Serranoidei</taxon>
        <taxon>Serranidae</taxon>
        <taxon>Epinephelinae</taxon>
        <taxon>Epinephelini</taxon>
        <taxon>Epinephelus</taxon>
    </lineage>
</organism>
<dbReference type="GO" id="GO:0005581">
    <property type="term" value="C:collagen trimer"/>
    <property type="evidence" value="ECO:0007669"/>
    <property type="project" value="UniProtKB-KW"/>
</dbReference>
<dbReference type="GO" id="GO:0031012">
    <property type="term" value="C:extracellular matrix"/>
    <property type="evidence" value="ECO:0007669"/>
    <property type="project" value="TreeGrafter"/>
</dbReference>
<dbReference type="GO" id="GO:0005615">
    <property type="term" value="C:extracellular space"/>
    <property type="evidence" value="ECO:0007669"/>
    <property type="project" value="TreeGrafter"/>
</dbReference>
<dbReference type="GO" id="GO:0030020">
    <property type="term" value="F:extracellular matrix structural constituent conferring tensile strength"/>
    <property type="evidence" value="ECO:0007669"/>
    <property type="project" value="TreeGrafter"/>
</dbReference>
<dbReference type="GO" id="GO:0030198">
    <property type="term" value="P:extracellular matrix organization"/>
    <property type="evidence" value="ECO:0007669"/>
    <property type="project" value="TreeGrafter"/>
</dbReference>
<dbReference type="Gene3D" id="2.60.120.1000">
    <property type="match status" value="1"/>
</dbReference>
<dbReference type="InterPro" id="IPR008160">
    <property type="entry name" value="Collagen"/>
</dbReference>
<dbReference type="InterPro" id="IPR050149">
    <property type="entry name" value="Collagen_superfamily"/>
</dbReference>
<dbReference type="InterPro" id="IPR000885">
    <property type="entry name" value="Fib_collagen_C"/>
</dbReference>
<dbReference type="PANTHER" id="PTHR24023:SF1112">
    <property type="entry name" value="COL_CUTICLE_N DOMAIN-CONTAINING PROTEIN-RELATED"/>
    <property type="match status" value="1"/>
</dbReference>
<dbReference type="PANTHER" id="PTHR24023">
    <property type="entry name" value="COLLAGEN ALPHA"/>
    <property type="match status" value="1"/>
</dbReference>
<dbReference type="Pfam" id="PF01391">
    <property type="entry name" value="Collagen"/>
    <property type="match status" value="9"/>
</dbReference>
<dbReference type="PROSITE" id="PS51461">
    <property type="entry name" value="NC1_FIB"/>
    <property type="match status" value="1"/>
</dbReference>
<comment type="subcellular location">
    <subcellularLocation>
        <location evidence="1">Secreted</location>
        <location evidence="1">Extracellular space</location>
        <location evidence="1">Extracellular matrix</location>
    </subcellularLocation>
</comment>
<comment type="similarity">
    <text evidence="1">Belongs to the fibrillar collagen family.</text>
</comment>
<proteinExistence type="evidence at protein level"/>
<accession>C0HM87</accession>